<name>TRPC_STAS1</name>
<gene>
    <name evidence="1" type="primary">trpC</name>
    <name type="ordered locus">SSP1376</name>
</gene>
<protein>
    <recommendedName>
        <fullName evidence="1">Indole-3-glycerol phosphate synthase</fullName>
        <shortName evidence="1">IGPS</shortName>
        <ecNumber evidence="1">4.1.1.48</ecNumber>
    </recommendedName>
</protein>
<accession>Q49XH6</accession>
<reference key="1">
    <citation type="journal article" date="2005" name="Proc. Natl. Acad. Sci. U.S.A.">
        <title>Whole genome sequence of Staphylococcus saprophyticus reveals the pathogenesis of uncomplicated urinary tract infection.</title>
        <authorList>
            <person name="Kuroda M."/>
            <person name="Yamashita A."/>
            <person name="Hirakawa H."/>
            <person name="Kumano M."/>
            <person name="Morikawa K."/>
            <person name="Higashide M."/>
            <person name="Maruyama A."/>
            <person name="Inose Y."/>
            <person name="Matoba K."/>
            <person name="Toh H."/>
            <person name="Kuhara S."/>
            <person name="Hattori M."/>
            <person name="Ohta T."/>
        </authorList>
    </citation>
    <scope>NUCLEOTIDE SEQUENCE [LARGE SCALE GENOMIC DNA]</scope>
    <source>
        <strain>ATCC 15305 / DSM 20229 / NCIMB 8711 / NCTC 7292 / S-41</strain>
    </source>
</reference>
<organism>
    <name type="scientific">Staphylococcus saprophyticus subsp. saprophyticus (strain ATCC 15305 / DSM 20229 / NCIMB 8711 / NCTC 7292 / S-41)</name>
    <dbReference type="NCBI Taxonomy" id="342451"/>
    <lineage>
        <taxon>Bacteria</taxon>
        <taxon>Bacillati</taxon>
        <taxon>Bacillota</taxon>
        <taxon>Bacilli</taxon>
        <taxon>Bacillales</taxon>
        <taxon>Staphylococcaceae</taxon>
        <taxon>Staphylococcus</taxon>
    </lineage>
</organism>
<dbReference type="EC" id="4.1.1.48" evidence="1"/>
<dbReference type="EMBL" id="AP008934">
    <property type="protein sequence ID" value="BAE18521.1"/>
    <property type="molecule type" value="Genomic_DNA"/>
</dbReference>
<dbReference type="RefSeq" id="WP_011303152.1">
    <property type="nucleotide sequence ID" value="NZ_MTGA01000038.1"/>
</dbReference>
<dbReference type="SMR" id="Q49XH6"/>
<dbReference type="GeneID" id="3617104"/>
<dbReference type="KEGG" id="ssp:SSP1376"/>
<dbReference type="PATRIC" id="fig|342451.11.peg.1381"/>
<dbReference type="eggNOG" id="COG0134">
    <property type="taxonomic scope" value="Bacteria"/>
</dbReference>
<dbReference type="HOGENOM" id="CLU_034247_2_1_9"/>
<dbReference type="OrthoDB" id="9804217at2"/>
<dbReference type="UniPathway" id="UPA00035">
    <property type="reaction ID" value="UER00043"/>
</dbReference>
<dbReference type="Proteomes" id="UP000006371">
    <property type="component" value="Chromosome"/>
</dbReference>
<dbReference type="GO" id="GO:0004425">
    <property type="term" value="F:indole-3-glycerol-phosphate synthase activity"/>
    <property type="evidence" value="ECO:0007669"/>
    <property type="project" value="UniProtKB-UniRule"/>
</dbReference>
<dbReference type="GO" id="GO:0004640">
    <property type="term" value="F:phosphoribosylanthranilate isomerase activity"/>
    <property type="evidence" value="ECO:0007669"/>
    <property type="project" value="TreeGrafter"/>
</dbReference>
<dbReference type="GO" id="GO:0000162">
    <property type="term" value="P:L-tryptophan biosynthetic process"/>
    <property type="evidence" value="ECO:0007669"/>
    <property type="project" value="UniProtKB-UniRule"/>
</dbReference>
<dbReference type="CDD" id="cd00331">
    <property type="entry name" value="IGPS"/>
    <property type="match status" value="1"/>
</dbReference>
<dbReference type="FunFam" id="3.20.20.70:FF:000024">
    <property type="entry name" value="Indole-3-glycerol phosphate synthase"/>
    <property type="match status" value="1"/>
</dbReference>
<dbReference type="Gene3D" id="3.20.20.70">
    <property type="entry name" value="Aldolase class I"/>
    <property type="match status" value="1"/>
</dbReference>
<dbReference type="HAMAP" id="MF_00134_B">
    <property type="entry name" value="IGPS_B"/>
    <property type="match status" value="1"/>
</dbReference>
<dbReference type="InterPro" id="IPR013785">
    <property type="entry name" value="Aldolase_TIM"/>
</dbReference>
<dbReference type="InterPro" id="IPR045186">
    <property type="entry name" value="Indole-3-glycerol_P_synth"/>
</dbReference>
<dbReference type="InterPro" id="IPR013798">
    <property type="entry name" value="Indole-3-glycerol_P_synth_dom"/>
</dbReference>
<dbReference type="InterPro" id="IPR001468">
    <property type="entry name" value="Indole-3-GlycerolPSynthase_CS"/>
</dbReference>
<dbReference type="InterPro" id="IPR011060">
    <property type="entry name" value="RibuloseP-bd_barrel"/>
</dbReference>
<dbReference type="NCBIfam" id="NF001371">
    <property type="entry name" value="PRK00278.1-3"/>
    <property type="match status" value="1"/>
</dbReference>
<dbReference type="PANTHER" id="PTHR22854:SF2">
    <property type="entry name" value="INDOLE-3-GLYCEROL-PHOSPHATE SYNTHASE"/>
    <property type="match status" value="1"/>
</dbReference>
<dbReference type="PANTHER" id="PTHR22854">
    <property type="entry name" value="TRYPTOPHAN BIOSYNTHESIS PROTEIN"/>
    <property type="match status" value="1"/>
</dbReference>
<dbReference type="Pfam" id="PF00218">
    <property type="entry name" value="IGPS"/>
    <property type="match status" value="1"/>
</dbReference>
<dbReference type="SUPFAM" id="SSF51366">
    <property type="entry name" value="Ribulose-phoshate binding barrel"/>
    <property type="match status" value="1"/>
</dbReference>
<dbReference type="PROSITE" id="PS00614">
    <property type="entry name" value="IGPS"/>
    <property type="match status" value="1"/>
</dbReference>
<keyword id="KW-0028">Amino-acid biosynthesis</keyword>
<keyword id="KW-0057">Aromatic amino acid biosynthesis</keyword>
<keyword id="KW-0210">Decarboxylase</keyword>
<keyword id="KW-0456">Lyase</keyword>
<keyword id="KW-1185">Reference proteome</keyword>
<keyword id="KW-0822">Tryptophan biosynthesis</keyword>
<sequence>MTILDEIVDYKRNLIKEGYYEEKLKTLNEVDITHKSSFKSQLDESNQLAVIAEIKSKSPTLDQLPNRDLAQQVKDYEANGANAVSILTDEHYFGGSYERLQDLTLQTTLPVLCKDFVVDKIQIDVAKKAGASIILLIVNVLTDQQMKDLYQYATSLNLEVLVEVHDKEELERAYKLKPQIIGVNNRDLKRFVTDVLHTNEILENKKEGYYYISESGIRDEQDVANVVESGIDGLLIGESLMKCEDLSQFLPGLKLTKVTK</sequence>
<feature type="chain" id="PRO_0000154258" description="Indole-3-glycerol phosphate synthase">
    <location>
        <begin position="1"/>
        <end position="260"/>
    </location>
</feature>
<evidence type="ECO:0000255" key="1">
    <source>
        <dbReference type="HAMAP-Rule" id="MF_00134"/>
    </source>
</evidence>
<comment type="catalytic activity">
    <reaction evidence="1">
        <text>1-(2-carboxyphenylamino)-1-deoxy-D-ribulose 5-phosphate + H(+) = (1S,2R)-1-C-(indol-3-yl)glycerol 3-phosphate + CO2 + H2O</text>
        <dbReference type="Rhea" id="RHEA:23476"/>
        <dbReference type="ChEBI" id="CHEBI:15377"/>
        <dbReference type="ChEBI" id="CHEBI:15378"/>
        <dbReference type="ChEBI" id="CHEBI:16526"/>
        <dbReference type="ChEBI" id="CHEBI:58613"/>
        <dbReference type="ChEBI" id="CHEBI:58866"/>
        <dbReference type="EC" id="4.1.1.48"/>
    </reaction>
</comment>
<comment type="pathway">
    <text evidence="1">Amino-acid biosynthesis; L-tryptophan biosynthesis; L-tryptophan from chorismate: step 4/5.</text>
</comment>
<comment type="similarity">
    <text evidence="1">Belongs to the TrpC family.</text>
</comment>
<proteinExistence type="inferred from homology"/>